<proteinExistence type="evidence at protein level"/>
<sequence>MIPRKRYGSKNTDQGVYLGLSKTQVLSPATAINSSSDIAPLPTPVALVPSPPDTMSCRDRTQEFLSACKSLQSRQNGIQTNKPALHATRQCSEFTLMARRIGKDLSNTFAKLEKLTILAKRKSLFDDKAVEIEELTYIIKQDINSLNKQIAQLQDFVRAKGSQSGRHLQTHSNTIVVSLQSKLASMSNDFKSVLEVRTENLKQQRNRREQFSRAPVSALPLAPNNLGGGPIVLGGESRASRDVAIDMMDPRTSQQLQLIDEQDSYIQSRADTMQNIESTIVELGSIFQQLAHMVKEQEETIQRIDENVLGAQLDVEAAHSEILKYFQSVTSNRWLMVKIFLILIVFFIIFVVFLA</sequence>
<gene>
    <name type="primary">Stx5</name>
    <name type="synonym">Stx5a</name>
</gene>
<comment type="function">
    <text evidence="5 8 9 11">Mediates endoplasmic reticulum to Golgi transport (PubMed:10930451, PubMed:14742712, PubMed:9506515). Together with p115/USO1 and GM130/GOLGA2, involved in vesicle tethering and fusion at the cis-Golgi membrane to maintain the stacked and inter-connected structure of the Golgi apparatus (PubMed:18167358).</text>
</comment>
<comment type="function">
    <molecule>Isoform 2</molecule>
    <text evidence="1">Required for Golgi to endoplasmic reticulum retrogade transport, and for intra-Golgi transport.</text>
</comment>
<comment type="subunit">
    <text evidence="1 2 7 9 11">Part of a ternary complex containing STX5A, NSFL1C and VCP (PubMed:9506515). Part of a unique SNARE complex composed of the Golgi SNAREs GOSR1, GOSR2 and YKT6. This complex also includes VTI1A (By similarity). Component of a SNARE complex consisting of STX5, YKT6, GOSR1 and BET1L (PubMed:12388752). Interacts with BET1L (By similarity). Interacts with BET1 (By similarity). Interacts with COG4 (By similarity). Interacts with GM130/GOLGA2 (PubMed:18167358). Interacts (via IxM motif) with SEC24C and SEC24D; mediates STX5 packaging into COPII-coated vesicles (By similarity). Interacts with VLDLR; this interaction mediates VLDLR translocation from the endoplasmic reticulum to the plasma membrane (By similarity).</text>
</comment>
<comment type="interaction">
    <interactant intactId="EBI-2028244">
        <id>Q08851</id>
    </interactant>
    <interactant intactId="EBI-7837133">
        <id>Q62931</id>
        <label>Gosr1</label>
    </interactant>
    <organismsDiffer>false</organismsDiffer>
    <experiments>15</experiments>
</comment>
<comment type="interaction">
    <interactant intactId="EBI-2028244">
        <id>Q08851</id>
    </interactant>
    <interactant intactId="EBI-4423297">
        <id>P41542</id>
        <label>Uso1</label>
    </interactant>
    <organismsDiffer>false</organismsDiffer>
    <experiments>8</experiments>
</comment>
<comment type="subcellular location">
    <subcellularLocation>
        <location evidence="6 10">Endoplasmic reticulum-Golgi intermediate compartment membrane</location>
        <topology evidence="3">Single-pass type IV membrane protein</topology>
    </subcellularLocation>
    <subcellularLocation>
        <location evidence="10">Golgi apparatus membrane</location>
    </subcellularLocation>
    <text evidence="10">Localizes throughout the Golgi apparatus, but most abundant in the cis-most cisternae.</text>
</comment>
<comment type="alternative products">
    <event type="alternative initiation"/>
    <isoform>
        <id>Q08851-1</id>
        <name>1</name>
        <sequence type="displayed"/>
    </isoform>
    <isoform>
        <id>Q08851-2</id>
        <name>2</name>
        <sequence type="described" ref="VSP_020117"/>
    </isoform>
</comment>
<comment type="tissue specificity">
    <text evidence="10">Expressed in the brain, heart, spleen, lung, liver, kidney and testis.</text>
</comment>
<comment type="miscellaneous">
    <molecule>Isoform 2</molecule>
    <text evidence="13">Produced by alternative initiation at Met-55 of isoform 1.</text>
</comment>
<comment type="similarity">
    <text evidence="13">Belongs to the syntaxin family.</text>
</comment>
<accession>Q08851</accession>
<accession>A0JPL4</accession>
<accession>O55200</accession>
<keyword id="KW-0024">Alternative initiation</keyword>
<keyword id="KW-0175">Coiled coil</keyword>
<keyword id="KW-0333">Golgi apparatus</keyword>
<keyword id="KW-0472">Membrane</keyword>
<keyword id="KW-1185">Reference proteome</keyword>
<keyword id="KW-0812">Transmembrane</keyword>
<keyword id="KW-1133">Transmembrane helix</keyword>
<keyword id="KW-0813">Transport</keyword>
<dbReference type="EMBL" id="L20822">
    <property type="protein sequence ID" value="AAA03047.1"/>
    <property type="molecule type" value="mRNA"/>
</dbReference>
<dbReference type="EMBL" id="BC127489">
    <property type="protein sequence ID" value="AAI27490.1"/>
    <property type="molecule type" value="mRNA"/>
</dbReference>
<dbReference type="EMBL" id="U87971">
    <property type="protein sequence ID" value="AAB93844.1"/>
    <property type="molecule type" value="mRNA"/>
</dbReference>
<dbReference type="PIR" id="F48213">
    <property type="entry name" value="F48213"/>
</dbReference>
<dbReference type="RefSeq" id="NP_113892.2">
    <molecule id="Q08851-1"/>
    <property type="nucleotide sequence ID" value="NM_031704.2"/>
</dbReference>
<dbReference type="RefSeq" id="XP_006231059.1">
    <molecule id="Q08851-1"/>
    <property type="nucleotide sequence ID" value="XM_006230997.4"/>
</dbReference>
<dbReference type="RefSeq" id="XP_038945820.1">
    <molecule id="Q08851-1"/>
    <property type="nucleotide sequence ID" value="XM_039089892.2"/>
</dbReference>
<dbReference type="SMR" id="Q08851"/>
<dbReference type="BioGRID" id="249255">
    <property type="interactions" value="2"/>
</dbReference>
<dbReference type="CORUM" id="Q08851"/>
<dbReference type="FunCoup" id="Q08851">
    <property type="interactions" value="2829"/>
</dbReference>
<dbReference type="IntAct" id="Q08851">
    <property type="interactions" value="11"/>
</dbReference>
<dbReference type="STRING" id="10116.ENSRNOP00000025664"/>
<dbReference type="GlyGen" id="Q08851">
    <property type="glycosylation" value="1 site"/>
</dbReference>
<dbReference type="PhosphoSitePlus" id="Q08851"/>
<dbReference type="jPOST" id="Q08851"/>
<dbReference type="PaxDb" id="10116-ENSRNOP00000025664"/>
<dbReference type="Ensembl" id="ENSRNOT00000095404.1">
    <molecule id="Q08851-1"/>
    <property type="protein sequence ID" value="ENSRNOP00000092180.1"/>
    <property type="gene ID" value="ENSRNOG00000018847.6"/>
</dbReference>
<dbReference type="GeneID" id="65134"/>
<dbReference type="KEGG" id="rno:65134"/>
<dbReference type="UCSC" id="RGD:68426">
    <molecule id="Q08851-1"/>
    <property type="organism name" value="rat"/>
</dbReference>
<dbReference type="AGR" id="RGD:68426"/>
<dbReference type="CTD" id="6811"/>
<dbReference type="RGD" id="68426">
    <property type="gene designation" value="Stx5"/>
</dbReference>
<dbReference type="eggNOG" id="KOG0812">
    <property type="taxonomic scope" value="Eukaryota"/>
</dbReference>
<dbReference type="GeneTree" id="ENSGT01000000214440"/>
<dbReference type="HOGENOM" id="CLU_044998_1_1_1"/>
<dbReference type="InParanoid" id="Q08851"/>
<dbReference type="OMA" id="EHNHNVV"/>
<dbReference type="OrthoDB" id="421009at2759"/>
<dbReference type="PhylomeDB" id="Q08851"/>
<dbReference type="TreeFam" id="TF315068"/>
<dbReference type="Reactome" id="R-RNO-204005">
    <property type="pathway name" value="COPII-mediated vesicle transport"/>
</dbReference>
<dbReference type="Reactome" id="R-RNO-5694530">
    <property type="pathway name" value="Cargo concentration in the ER"/>
</dbReference>
<dbReference type="Reactome" id="R-RNO-6807878">
    <property type="pathway name" value="COPI-mediated anterograde transport"/>
</dbReference>
<dbReference type="Reactome" id="R-RNO-6811438">
    <property type="pathway name" value="Intra-Golgi traffic"/>
</dbReference>
<dbReference type="Reactome" id="R-RNO-8980692">
    <property type="pathway name" value="RHOA GTPase cycle"/>
</dbReference>
<dbReference type="Reactome" id="R-RNO-9013408">
    <property type="pathway name" value="RHOG GTPase cycle"/>
</dbReference>
<dbReference type="Reactome" id="R-RNO-9609523">
    <property type="pathway name" value="Insertion of tail-anchored proteins into the endoplasmic reticulum membrane"/>
</dbReference>
<dbReference type="PRO" id="PR:Q08851"/>
<dbReference type="Proteomes" id="UP000002494">
    <property type="component" value="Chromosome 1"/>
</dbReference>
<dbReference type="Bgee" id="ENSRNOG00000018847">
    <property type="expression patterns" value="Expressed in pancreas and 20 other cell types or tissues"/>
</dbReference>
<dbReference type="GO" id="GO:0005829">
    <property type="term" value="C:cytosol"/>
    <property type="evidence" value="ECO:0007669"/>
    <property type="project" value="GOC"/>
</dbReference>
<dbReference type="GO" id="GO:0012505">
    <property type="term" value="C:endomembrane system"/>
    <property type="evidence" value="ECO:0000318"/>
    <property type="project" value="GO_Central"/>
</dbReference>
<dbReference type="GO" id="GO:0033116">
    <property type="term" value="C:endoplasmic reticulum-Golgi intermediate compartment membrane"/>
    <property type="evidence" value="ECO:0007669"/>
    <property type="project" value="UniProtKB-SubCell"/>
</dbReference>
<dbReference type="GO" id="GO:0005794">
    <property type="term" value="C:Golgi apparatus"/>
    <property type="evidence" value="ECO:0000266"/>
    <property type="project" value="RGD"/>
</dbReference>
<dbReference type="GO" id="GO:0000139">
    <property type="term" value="C:Golgi membrane"/>
    <property type="evidence" value="ECO:0000314"/>
    <property type="project" value="RGD"/>
</dbReference>
<dbReference type="GO" id="GO:0031201">
    <property type="term" value="C:SNARE complex"/>
    <property type="evidence" value="ECO:0000314"/>
    <property type="project" value="RGD"/>
</dbReference>
<dbReference type="GO" id="GO:0031982">
    <property type="term" value="C:vesicle"/>
    <property type="evidence" value="ECO:0000266"/>
    <property type="project" value="RGD"/>
</dbReference>
<dbReference type="GO" id="GO:0005484">
    <property type="term" value="F:SNAP receptor activity"/>
    <property type="evidence" value="ECO:0000266"/>
    <property type="project" value="RGD"/>
</dbReference>
<dbReference type="GO" id="GO:0000149">
    <property type="term" value="F:SNARE binding"/>
    <property type="evidence" value="ECO:0000318"/>
    <property type="project" value="GO_Central"/>
</dbReference>
<dbReference type="GO" id="GO:0034498">
    <property type="term" value="P:early endosome to Golgi transport"/>
    <property type="evidence" value="ECO:0000266"/>
    <property type="project" value="RGD"/>
</dbReference>
<dbReference type="GO" id="GO:0006888">
    <property type="term" value="P:endoplasmic reticulum to Golgi vesicle-mediated transport"/>
    <property type="evidence" value="ECO:0000314"/>
    <property type="project" value="RGD"/>
</dbReference>
<dbReference type="GO" id="GO:0090166">
    <property type="term" value="P:Golgi disassembly"/>
    <property type="evidence" value="ECO:0000266"/>
    <property type="project" value="RGD"/>
</dbReference>
<dbReference type="GO" id="GO:0006886">
    <property type="term" value="P:intracellular protein transport"/>
    <property type="evidence" value="ECO:0000318"/>
    <property type="project" value="GO_Central"/>
</dbReference>
<dbReference type="GO" id="GO:0045732">
    <property type="term" value="P:positive regulation of protein catabolic process"/>
    <property type="evidence" value="ECO:0000266"/>
    <property type="project" value="RGD"/>
</dbReference>
<dbReference type="GO" id="GO:1903358">
    <property type="term" value="P:regulation of Golgi organization"/>
    <property type="evidence" value="ECO:0000266"/>
    <property type="project" value="RGD"/>
</dbReference>
<dbReference type="GO" id="GO:0042147">
    <property type="term" value="P:retrograde transport, endosome to Golgi"/>
    <property type="evidence" value="ECO:0000266"/>
    <property type="project" value="RGD"/>
</dbReference>
<dbReference type="GO" id="GO:0048278">
    <property type="term" value="P:vesicle docking"/>
    <property type="evidence" value="ECO:0000318"/>
    <property type="project" value="GO_Central"/>
</dbReference>
<dbReference type="GO" id="GO:0006906">
    <property type="term" value="P:vesicle fusion"/>
    <property type="evidence" value="ECO:0000318"/>
    <property type="project" value="GO_Central"/>
</dbReference>
<dbReference type="GO" id="GO:0048280">
    <property type="term" value="P:vesicle fusion with Golgi apparatus"/>
    <property type="evidence" value="ECO:0000314"/>
    <property type="project" value="RGD"/>
</dbReference>
<dbReference type="CDD" id="cd15844">
    <property type="entry name" value="SNARE_syntaxin5"/>
    <property type="match status" value="1"/>
</dbReference>
<dbReference type="FunFam" id="1.20.5.110:FF:000187">
    <property type="entry name" value="SNARE domain containing protein"/>
    <property type="match status" value="1"/>
</dbReference>
<dbReference type="FunFam" id="1.20.58.70:FF:000005">
    <property type="entry name" value="syntaxin-5 isoform X1"/>
    <property type="match status" value="1"/>
</dbReference>
<dbReference type="Gene3D" id="1.20.58.70">
    <property type="match status" value="1"/>
</dbReference>
<dbReference type="InterPro" id="IPR010989">
    <property type="entry name" value="SNARE"/>
</dbReference>
<dbReference type="InterPro" id="IPR045242">
    <property type="entry name" value="Syntaxin"/>
</dbReference>
<dbReference type="InterPro" id="IPR021538">
    <property type="entry name" value="Syntaxin-5_N"/>
</dbReference>
<dbReference type="InterPro" id="IPR006012">
    <property type="entry name" value="Syntaxin/epimorphin_CS"/>
</dbReference>
<dbReference type="InterPro" id="IPR000727">
    <property type="entry name" value="T_SNARE_dom"/>
</dbReference>
<dbReference type="PANTHER" id="PTHR19957">
    <property type="entry name" value="SYNTAXIN"/>
    <property type="match status" value="1"/>
</dbReference>
<dbReference type="PANTHER" id="PTHR19957:SF3">
    <property type="entry name" value="SYNTAXIN-5"/>
    <property type="match status" value="1"/>
</dbReference>
<dbReference type="Pfam" id="PF05739">
    <property type="entry name" value="SNARE"/>
    <property type="match status" value="1"/>
</dbReference>
<dbReference type="Pfam" id="PF11416">
    <property type="entry name" value="Syntaxin-5_N"/>
    <property type="match status" value="1"/>
</dbReference>
<dbReference type="SMART" id="SM00397">
    <property type="entry name" value="t_SNARE"/>
    <property type="match status" value="1"/>
</dbReference>
<dbReference type="SUPFAM" id="SSF47661">
    <property type="entry name" value="t-snare proteins"/>
    <property type="match status" value="1"/>
</dbReference>
<dbReference type="PROSITE" id="PS00914">
    <property type="entry name" value="SYNTAXIN"/>
    <property type="match status" value="1"/>
</dbReference>
<dbReference type="PROSITE" id="PS50192">
    <property type="entry name" value="T_SNARE"/>
    <property type="match status" value="1"/>
</dbReference>
<evidence type="ECO:0000250" key="1">
    <source>
        <dbReference type="UniProtKB" id="Q13190"/>
    </source>
</evidence>
<evidence type="ECO:0000250" key="2">
    <source>
        <dbReference type="UniProtKB" id="Q8K1E0"/>
    </source>
</evidence>
<evidence type="ECO:0000255" key="3"/>
<evidence type="ECO:0000255" key="4">
    <source>
        <dbReference type="PROSITE-ProRule" id="PRU00202"/>
    </source>
</evidence>
<evidence type="ECO:0000269" key="5">
    <source>
    </source>
</evidence>
<evidence type="ECO:0000269" key="6">
    <source>
    </source>
</evidence>
<evidence type="ECO:0000269" key="7">
    <source>
    </source>
</evidence>
<evidence type="ECO:0000269" key="8">
    <source>
    </source>
</evidence>
<evidence type="ECO:0000269" key="9">
    <source>
    </source>
</evidence>
<evidence type="ECO:0000269" key="10">
    <source>
    </source>
</evidence>
<evidence type="ECO:0000269" key="11">
    <source>
    </source>
</evidence>
<evidence type="ECO:0000303" key="12">
    <source>
    </source>
</evidence>
<evidence type="ECO:0000305" key="13"/>
<protein>
    <recommendedName>
        <fullName>Syntaxin-5</fullName>
    </recommendedName>
</protein>
<name>STX5_RAT</name>
<feature type="chain" id="PRO_0000210207" description="Syntaxin-5">
    <location>
        <begin position="1"/>
        <end position="355"/>
    </location>
</feature>
<feature type="topological domain" description="Cytoplasmic" evidence="3">
    <location>
        <begin position="1"/>
        <end position="333"/>
    </location>
</feature>
<feature type="transmembrane region" description="Helical; Anchor for type IV membrane protein" evidence="3">
    <location>
        <begin position="334"/>
        <end position="354"/>
    </location>
</feature>
<feature type="topological domain" description="Vesicular" evidence="3">
    <location>
        <position position="355"/>
    </location>
</feature>
<feature type="domain" description="t-SNARE coiled-coil homology" evidence="4">
    <location>
        <begin position="263"/>
        <end position="325"/>
    </location>
</feature>
<feature type="coiled-coil region" evidence="3">
    <location>
        <begin position="287"/>
        <end position="318"/>
    </location>
</feature>
<feature type="short sequence motif" description="IxM motif; signal for cargo packaging into COPII-coated vesicles" evidence="1">
    <location>
        <begin position="245"/>
        <end position="247"/>
    </location>
</feature>
<feature type="splice variant" id="VSP_020117" description="In isoform 2." evidence="12">
    <location>
        <begin position="1"/>
        <end position="54"/>
    </location>
</feature>
<organism>
    <name type="scientific">Rattus norvegicus</name>
    <name type="common">Rat</name>
    <dbReference type="NCBI Taxonomy" id="10116"/>
    <lineage>
        <taxon>Eukaryota</taxon>
        <taxon>Metazoa</taxon>
        <taxon>Chordata</taxon>
        <taxon>Craniata</taxon>
        <taxon>Vertebrata</taxon>
        <taxon>Euteleostomi</taxon>
        <taxon>Mammalia</taxon>
        <taxon>Eutheria</taxon>
        <taxon>Euarchontoglires</taxon>
        <taxon>Glires</taxon>
        <taxon>Rodentia</taxon>
        <taxon>Myomorpha</taxon>
        <taxon>Muroidea</taxon>
        <taxon>Muridae</taxon>
        <taxon>Murinae</taxon>
        <taxon>Rattus</taxon>
    </lineage>
</organism>
<reference key="1">
    <citation type="journal article" date="1993" name="Cell">
        <title>The syntaxin family of vesicular transport receptors.</title>
        <authorList>
            <person name="Bennett M.K."/>
            <person name="Garcia-Arraras J.E."/>
            <person name="Elferink L.A."/>
            <person name="Peterson K.E."/>
            <person name="Fleming A.M."/>
            <person name="Hazuka C.D."/>
            <person name="Scheller R.H."/>
        </authorList>
    </citation>
    <scope>NUCLEOTIDE SEQUENCE [MRNA] (ISOFORM 2)</scope>
    <source>
        <tissue>Brain</tissue>
    </source>
</reference>
<reference key="2">
    <citation type="journal article" date="2004" name="Genome Res.">
        <title>The status, quality, and expansion of the NIH full-length cDNA project: the Mammalian Gene Collection (MGC).</title>
        <authorList>
            <consortium name="The MGC Project Team"/>
        </authorList>
    </citation>
    <scope>NUCLEOTIDE SEQUENCE [LARGE SCALE MRNA] (ISOFORM 1)</scope>
    <source>
        <tissue>Spleen</tissue>
    </source>
</reference>
<reference key="3">
    <citation type="journal article" date="1997" name="Mol. Biol. Cell">
        <title>An isoform of the Golgi t-SNARE, syntaxin 5, with an endoplasmic reticulum retrieval signal.</title>
        <authorList>
            <person name="Hui N."/>
            <person name="Nakamura N."/>
            <person name="Sonnichsen B."/>
            <person name="Shima D.T."/>
            <person name="Nilsson T."/>
            <person name="Warren G."/>
        </authorList>
    </citation>
    <scope>NUCLEOTIDE SEQUENCE [MRNA] OF 1-211 (ISOFORM 1)</scope>
    <scope>SUBCELLULAR LOCATION</scope>
    <scope>TISSUE SPECIFICITY</scope>
    <scope>ALTERNATIVE INITIATION</scope>
    <source>
        <strain>Sprague-Dawley</strain>
        <tissue>Liver</tissue>
    </source>
</reference>
<reference key="4">
    <citation type="journal article" date="1998" name="Cell">
        <title>Syntaxin 5 is a common component of the NSF- and p97-mediated reassembly pathways of Golgi cisternae from mitotic Golgi fragments in vitro.</title>
        <authorList>
            <person name="Rabouille C."/>
            <person name="Kondo H."/>
            <person name="Newman R."/>
            <person name="Hui N."/>
            <person name="Freemont P."/>
            <person name="Warren G."/>
        </authorList>
    </citation>
    <scope>FUNCTION</scope>
    <scope>INTERACTION WITH VCP AND NSFL1C</scope>
</reference>
<reference key="5">
    <citation type="journal article" date="2000" name="Mol. Biol. Cell">
        <title>Role of p97 and syntaxin 5 in the assembly of transitional endoplasmic reticulum.</title>
        <authorList>
            <person name="Roy L."/>
            <person name="Bergeron J.J.M."/>
            <person name="Lavoie C."/>
            <person name="Hendriks R."/>
            <person name="Gushue J."/>
            <person name="Fazel A."/>
            <person name="Pelletier A."/>
            <person name="Morre D.J."/>
            <person name="Subramaniam V.N."/>
            <person name="Hong W."/>
            <person name="Paiement J."/>
        </authorList>
    </citation>
    <scope>FUNCTION</scope>
    <scope>INTERACTION WITH VCP AND NSFL1C</scope>
</reference>
<reference key="6">
    <citation type="journal article" date="2001" name="J. Biol. Chem.">
        <title>Ykt6 forms a SNARE complex with syntaxin 5, GS28, and Bet1 and participates in a late stage in endoplasmic reticulum-Golgi transport.</title>
        <authorList>
            <person name="Zhang T."/>
            <person name="Hong W."/>
        </authorList>
    </citation>
    <scope>SUBCELLULAR LOCATION</scope>
    <scope>INTERACTION WITH GOSR1; GOSR2 AND YKT6</scope>
</reference>
<reference key="7">
    <citation type="journal article" date="2002" name="Mol. Biol. Cell">
        <title>GS15 forms a SNARE complex with syntaxin 5, GS28, and Ykt6 and is implicated in traffic in the early cisternae of the Golgi apparatus.</title>
        <authorList>
            <person name="Xu Y."/>
            <person name="Martin S."/>
            <person name="James D.E."/>
            <person name="Hong W."/>
        </authorList>
    </citation>
    <scope>IDENTIFICATION IN A COMPLEX WITH BET1L; YKT6 AND GOSR1</scope>
</reference>
<reference key="8">
    <citation type="journal article" date="2004" name="Mol. Biol. Cell">
        <title>Countercurrent distribution of two distinct SNARE complexes mediating transport within the Golgi stack.</title>
        <authorList>
            <person name="Volchuk A."/>
            <person name="Ravazzola M."/>
            <person name="Perrelet A."/>
            <person name="Eng W.S."/>
            <person name="Di Liberto M."/>
            <person name="Varlamov O."/>
            <person name="Fukasawa M."/>
            <person name="Engel T."/>
            <person name="Sollner T.H."/>
            <person name="Rothman J.E."/>
            <person name="Orci L."/>
        </authorList>
    </citation>
    <scope>SUBCELLULAR LOCATION</scope>
    <scope>FUNCTION</scope>
</reference>
<reference key="9">
    <citation type="journal article" date="2008" name="J. Biol. Chem.">
        <title>Coordination of golgin tethering and SNARE assembly: GM130 binds syntaxin 5 in a p115-regulated manner.</title>
        <authorList>
            <person name="Diao A."/>
            <person name="Frost L."/>
            <person name="Morohashi Y."/>
            <person name="Lowe M."/>
        </authorList>
    </citation>
    <scope>FUNCTION</scope>
    <scope>INTERACTION WITH GOLGA2</scope>
</reference>